<feature type="signal peptide" evidence="2">
    <location>
        <begin position="1"/>
        <end position="19"/>
    </location>
</feature>
<feature type="propeptide" id="PRO_0000035053" evidence="14">
    <location>
        <begin position="20"/>
        <end position="49"/>
    </location>
</feature>
<feature type="peptide" id="PRO_0000035054" description="Mu-conotoxin PIIIA" evidence="14">
    <location>
        <begin position="50"/>
        <end position="71"/>
    </location>
</feature>
<feature type="site" description="Important for activity" evidence="10">
    <location>
        <position position="63"/>
    </location>
</feature>
<feature type="modified residue" description="Pyrrolidone carboxylic acid" evidence="13 14">
    <location>
        <position position="50"/>
    </location>
</feature>
<feature type="modified residue" description="4-hydroxyproline" evidence="14">
    <location>
        <position position="57"/>
    </location>
</feature>
<feature type="modified residue" description="4-hydroxyproline" evidence="14">
    <location>
        <position position="67"/>
    </location>
</feature>
<feature type="modified residue" description="Cysteine amide" evidence="14">
    <location>
        <position position="71"/>
    </location>
</feature>
<feature type="disulfide bond" description="In PIIIA-1; alternate" evidence="1">
    <location>
        <begin position="53"/>
        <end position="70"/>
    </location>
</feature>
<feature type="disulfide bond" description="In PIIIA-2; alternate" evidence="4 15">
    <location>
        <begin position="53"/>
        <end position="65"/>
    </location>
</feature>
<feature type="disulfide bond" description="In PIIIA-1; alternate" evidence="1">
    <location>
        <begin position="54"/>
        <end position="71"/>
    </location>
</feature>
<feature type="disulfide bond" description="In PIIIA-2; alternate" evidence="4 15">
    <location>
        <begin position="54"/>
        <end position="70"/>
    </location>
</feature>
<feature type="disulfide bond" description="In PIIIA-2; alternate" evidence="4">
    <location>
        <begin position="60"/>
        <end position="71"/>
    </location>
</feature>
<feature type="disulfide bond" description="In PIIIA-1; alternate" evidence="1">
    <location>
        <begin position="60"/>
        <end position="65"/>
    </location>
</feature>
<feature type="mutagenesis site" description="Decrease in affinity to channel." evidence="10">
    <original>R</original>
    <variation>A</variation>
    <location>
        <position position="63"/>
    </location>
</feature>
<feature type="turn" evidence="16">
    <location>
        <begin position="52"/>
        <end position="55"/>
    </location>
</feature>
<feature type="helix" evidence="16">
    <location>
        <begin position="59"/>
        <end position="61"/>
    </location>
</feature>
<feature type="turn" evidence="16">
    <location>
        <begin position="63"/>
        <end position="67"/>
    </location>
</feature>
<proteinExistence type="evidence at transcript level"/>
<sequence>MSKLGVLLTICLLLFPITALPMDGDQPADRLAERMQDNISSEEHPFEKRQRLCCGFPKSCRSRQCKPHRCCGR</sequence>
<keyword id="KW-0002">3D-structure</keyword>
<keyword id="KW-0027">Amidation</keyword>
<keyword id="KW-0165">Cleavage on pair of basic residues</keyword>
<keyword id="KW-1015">Disulfide bond</keyword>
<keyword id="KW-0379">Hydroxylation</keyword>
<keyword id="KW-0872">Ion channel impairing toxin</keyword>
<keyword id="KW-0528">Neurotoxin</keyword>
<keyword id="KW-0873">Pyrrolidone carboxylic acid</keyword>
<keyword id="KW-0964">Secreted</keyword>
<keyword id="KW-0732">Signal</keyword>
<keyword id="KW-0800">Toxin</keyword>
<keyword id="KW-0738">Voltage-gated sodium channel impairing toxin</keyword>
<reference key="1">
    <citation type="journal article" date="2005" name="Biochemistry">
        <title>Definition of the M-conotoxin superfamily: characterization of novel peptides from molluscivorous Conus venoms.</title>
        <authorList>
            <person name="Corpuz G.P."/>
            <person name="Jacobsen R.B."/>
            <person name="Jimenez E.C."/>
            <person name="Watkins M."/>
            <person name="Walker C."/>
            <person name="Colledge C."/>
            <person name="Garrett J.E."/>
            <person name="McDougal O."/>
            <person name="Li W."/>
            <person name="Gray W.R."/>
            <person name="Hillyard D.R."/>
            <person name="Rivier J."/>
            <person name="McIntosh J.M."/>
            <person name="Cruz L.J."/>
            <person name="Olivera B.M."/>
        </authorList>
    </citation>
    <scope>NUCLEOTIDE SEQUENCE [MRNA]</scope>
    <source>
        <tissue>Venom duct</tissue>
    </source>
</reference>
<reference key="2">
    <citation type="journal article" date="1998" name="J. Neurosci.">
        <title>Mu-conotoxin PIIIA, a new peptide for discriminating among tetrodotoxin-sensitive Na channel subtypes.</title>
        <authorList>
            <person name="Shon K.-J."/>
            <person name="Olivera B.M."/>
            <person name="Watkins M."/>
            <person name="Jacobsen R.B."/>
            <person name="Gray W.R."/>
            <person name="Floresca C.Z."/>
            <person name="Cruz L.J."/>
            <person name="Hillyard D.R."/>
            <person name="Brink A."/>
            <person name="Terlau H."/>
            <person name="Yoshikami D."/>
        </authorList>
    </citation>
    <scope>NUCLEOTIDE SEQUENCE [MRNA] OF 47-73</scope>
    <scope>SYNTHESIS OF 50-71</scope>
    <scope>MUTAGENESIS OF ARG-63</scope>
    <scope>PROBABLE PYROGLUTAMATE FORMATION AT GLN-50</scope>
    <scope>PROBABLE HYDROXYLATION AT PRO-57 AND PRO-67</scope>
    <scope>PROBABLE AMIDATION AT CYS-71</scope>
    <source>
        <tissue>Venom duct</tissue>
    </source>
</reference>
<reference key="3">
    <citation type="journal article" date="2000" name="J. Neurosci.">
        <title>Distinction among neuronal subtypes of voltage-activated sodium channels by mu-conotoxin PIIIA.</title>
        <authorList>
            <person name="Safo P."/>
            <person name="Rosenbaum T."/>
            <person name="Shcherbatko A."/>
            <person name="Choi D.-Y."/>
            <person name="Han E."/>
            <person name="Toledo-Aral J.J."/>
            <person name="Olivera B.M."/>
            <person name="Brehm P."/>
            <person name="Mandel G."/>
        </authorList>
    </citation>
    <scope>FUNCTION</scope>
</reference>
<reference key="4">
    <citation type="journal article" date="2009" name="Toxicon">
        <title>Pruning nature: biodiversity-derived discovery of novel sodium channel blocking conotoxins from Conus bullatus.</title>
        <authorList>
            <person name="Holford M."/>
            <person name="Zhang M.-M."/>
            <person name="Gowd K.H."/>
            <person name="Azam L."/>
            <person name="Green B.R."/>
            <person name="Watkins M."/>
            <person name="Ownby J.-P."/>
            <person name="Yoshikami D."/>
            <person name="Bulaj G."/>
            <person name="Olivera B.M."/>
        </authorList>
    </citation>
    <scope>FUNCTION</scope>
</reference>
<reference key="5">
    <citation type="journal article" date="2012" name="Br. J. Pharmacol.">
        <title>A novel u-conopeptide, CnIIIC, exerts potent and preferential inhibition of NaV1.2/1.4 channels and blocks neuronal nicotinic acetylcholine receptors.</title>
        <authorList>
            <person name="Favreau P."/>
            <person name="Benoit E."/>
            <person name="Hocking H.G."/>
            <person name="Carlier L."/>
            <person name="D'Hoedt D."/>
            <person name="Leipold E."/>
            <person name="Markgraf R."/>
            <person name="Schlumberger S."/>
            <person name="Cordova M.A."/>
            <person name="Gaertner H."/>
            <person name="Paolini-Bertrand M."/>
            <person name="Hartley O."/>
            <person name="Tytgat J."/>
            <person name="Heinemann S.H."/>
            <person name="Bertrand D."/>
            <person name="Boelens R."/>
            <person name="Stocklin R."/>
            <person name="Molgo J."/>
        </authorList>
    </citation>
    <scope>FUNCTION</scope>
    <scope>SYNTHESIS OF 50-71</scope>
</reference>
<reference key="6">
    <citation type="journal article" date="2011" name="Proc. Natl. Acad. Sci. U.S.A.">
        <title>mu-Conotoxins that differentially block sodium channels Nav1.1 through 1.8 identify those responsible for action potentials in sciatic nerve.</title>
        <authorList>
            <person name="Wilson M.J."/>
            <person name="Yoshikami D."/>
            <person name="Azam L."/>
            <person name="Gajewiak J."/>
            <person name="Olivera B.M."/>
            <person name="Bulaj G."/>
            <person name="Zhang M.M."/>
        </authorList>
    </citation>
    <scope>FUNCTION</scope>
    <scope>SYNTHESIS OF 50-71</scope>
</reference>
<reference key="7">
    <citation type="journal article" date="2013" name="Br. J. Pharmacol.">
        <title>Co-expression of Na(V)beta subunits alters the kinetics of inhibition of voltage-gated sodium channels by pore-blocking mu-conotoxins.</title>
        <authorList>
            <person name="Zhang M.M."/>
            <person name="Wilson M.J."/>
            <person name="Azam L."/>
            <person name="Gajewiak J."/>
            <person name="Rivier J.E."/>
            <person name="Bulaj G."/>
            <person name="Olivera B.M."/>
            <person name="Yoshikami D."/>
        </authorList>
    </citation>
    <scope>FUNCTION</scope>
</reference>
<reference key="8">
    <citation type="journal article" date="2012" name="Angew. Chem. Int. Ed.">
        <title>Structurally diverse mu-conotoxin PIIIA isomers block sodium channel NaV 1.4.</title>
        <authorList>
            <person name="Tietze A.A."/>
            <person name="Tietze D."/>
            <person name="Ohlenschlager O."/>
            <person name="Leipold E."/>
            <person name="Ullrich F."/>
            <person name="Kuhl T."/>
            <person name="Mischo A."/>
            <person name="Buntkowsky G."/>
            <person name="Gorlach M."/>
            <person name="Heinemann S.H."/>
            <person name="Imhof D."/>
        </authorList>
    </citation>
    <scope>STRUCTURE BY NMR OF 50-71</scope>
    <scope>SYNTHESIS OF 50-71</scope>
    <scope>FUNCTION</scope>
    <scope>DISULFIDE BONDS FOR 3 SYNTHETIC ISOMERS</scope>
</reference>
<reference key="9">
    <citation type="journal article" date="2002" name="J. Biol. Chem.">
        <title>Solution structure of mu-conotoxin PIIIA, a preferential inhibitor of persistent TTX-sensitive sodium channels.</title>
        <authorList>
            <person name="Nielsen K.J."/>
            <person name="Watson M."/>
            <person name="Adams D.J."/>
            <person name="Hammarstroem A.K."/>
            <person name="Gage P.W."/>
            <person name="Hill J.M."/>
            <person name="Craik D.J."/>
            <person name="Thomas L."/>
            <person name="Adams D."/>
            <person name="Alewood P.F."/>
            <person name="Lewis R.J."/>
        </authorList>
    </citation>
    <scope>STRUCTURE BY NMR OF 50-71</scope>
    <scope>SYNTHESIS OF 50-71</scope>
    <scope>DISULFIDE BONDS</scope>
</reference>
<accession>P58925</accession>
<protein>
    <recommendedName>
        <fullName evidence="11">Mu-conotoxin PIIIA</fullName>
    </recommendedName>
    <alternativeName>
        <fullName>Mu-conotoxin P3.7</fullName>
    </alternativeName>
</protein>
<comment type="function">
    <text evidence="3 5 6 7 8 9">Mu-conotoxins block voltage-gated sodium channels (Nav). This toxin potently blocks rNav1.4/SCN4A (IC(50)=36-41 nM) (PubMed:10627583, PubMed:21652775). It also moderately blocks rNav1.1/SCN1A (IC(50)=120 nM), rNav1.2/SCN2A (IC(50)=620 nM), rNav1.3/SCN3A (IC(50)=3.2 uM), mNav1.6/SCN8A (IC(50)=100 nM) (PubMed:10627583, PubMed:21652775). This inhibition is reversible. The block of Nav1.1, Nav1.2, and Nav1.6 is modified when beta-subunits are coexpressed with alpha subunits. Hence, blocks of channels containing the beta-1 and beta-3 subunits are more potent (compared to channels without beta subunits), whereas blocks of channels containing the beta-2 and beta-4 are less potent (compared to channels without beta subunits). In vivo, this peptide causes flaccid paralysis in both mice and fish.</text>
</comment>
<comment type="subcellular location">
    <subcellularLocation>
        <location evidence="1">Secreted</location>
    </subcellularLocation>
</comment>
<comment type="tissue specificity">
    <text evidence="14">Expressed by the venom duct.</text>
</comment>
<comment type="domain">
    <text evidence="12">The cysteine framework is III (CC-C-C-CC). Classified in the M-4 branch, since 4 residues stand between the fourth and the fifth cysteine residues.</text>
</comment>
<comment type="PTM">
    <text evidence="8">3D-structure of 3 disulfide-bond connectivities isomers is described (PIIIA-1 (C1-C5, C2-C6, C3-C4), PIIIA-2 (C1-C4, C2-C5, C3-C6) and PIIIA-3 (C1-C2, C3-C4, C5-C6)) (PubMed:22407516). Only PIIIA-2 contains the cysteine connectivity described as typical for native mu-conotoxins. However, PIIIA-1 is more potent than PIIIA-2, suggesting another possible disulfid connectivity. For this reason, both connectivities have been indicated in features.</text>
</comment>
<comment type="miscellaneous">
    <text evidence="13">Exists in two forms, due to cis-trans isomerization at Hyp-57. Adopts a predominately trans conformation (Probable).</text>
</comment>
<comment type="miscellaneous">
    <text evidence="3 6">Negative results: does not or only weakly blocks rNav1.5/SCN5A, rNav1.7/SCN9A (IC(50)=3.1-6.2 uM and &gt;100 uM), and rNav1.8/SCN10A.</text>
</comment>
<comment type="similarity">
    <text evidence="12">Belongs to the conotoxin M superfamily.</text>
</comment>
<organism>
    <name type="scientific">Conus purpurascens</name>
    <name type="common">Purple cone</name>
    <dbReference type="NCBI Taxonomy" id="41690"/>
    <lineage>
        <taxon>Eukaryota</taxon>
        <taxon>Metazoa</taxon>
        <taxon>Spiralia</taxon>
        <taxon>Lophotrochozoa</taxon>
        <taxon>Mollusca</taxon>
        <taxon>Gastropoda</taxon>
        <taxon>Caenogastropoda</taxon>
        <taxon>Neogastropoda</taxon>
        <taxon>Conoidea</taxon>
        <taxon>Conidae</taxon>
        <taxon>Conus</taxon>
        <taxon>Chelyconus</taxon>
    </lineage>
</organism>
<name>CM3A_CONPU</name>
<dbReference type="PDB" id="1R9I">
    <property type="method" value="NMR"/>
    <property type="chains" value="A=50-71"/>
</dbReference>
<dbReference type="PDBsum" id="1R9I"/>
<dbReference type="BMRB" id="P58925"/>
<dbReference type="SMR" id="P58925"/>
<dbReference type="TCDB" id="8.B.28.1.2">
    <property type="family name" value="the mu-conotoxin (mu-conotoxin) family"/>
</dbReference>
<dbReference type="ConoServer" id="1407">
    <property type="toxin name" value="PIIIA precursor"/>
</dbReference>
<dbReference type="EvolutionaryTrace" id="P58925"/>
<dbReference type="GO" id="GO:0005576">
    <property type="term" value="C:extracellular region"/>
    <property type="evidence" value="ECO:0007669"/>
    <property type="project" value="UniProtKB-SubCell"/>
</dbReference>
<dbReference type="GO" id="GO:0019871">
    <property type="term" value="F:sodium channel inhibitor activity"/>
    <property type="evidence" value="ECO:0007669"/>
    <property type="project" value="InterPro"/>
</dbReference>
<dbReference type="GO" id="GO:0090729">
    <property type="term" value="F:toxin activity"/>
    <property type="evidence" value="ECO:0007669"/>
    <property type="project" value="UniProtKB-KW"/>
</dbReference>
<dbReference type="InterPro" id="IPR004214">
    <property type="entry name" value="Conotoxin"/>
</dbReference>
<dbReference type="InterPro" id="IPR008036">
    <property type="entry name" value="Conotoxin_mu-typ"/>
</dbReference>
<dbReference type="Pfam" id="PF02950">
    <property type="entry name" value="Conotoxin"/>
    <property type="match status" value="1"/>
</dbReference>
<dbReference type="PROSITE" id="PS60013">
    <property type="entry name" value="MU_CONOTOXIN"/>
    <property type="match status" value="1"/>
</dbReference>
<evidence type="ECO:0000250" key="1">
    <source>
        <dbReference type="UniProtKB" id="P01523"/>
    </source>
</evidence>
<evidence type="ECO:0000255" key="2"/>
<evidence type="ECO:0000269" key="3">
    <source>
    </source>
</evidence>
<evidence type="ECO:0000269" key="4">
    <source>
    </source>
</evidence>
<evidence type="ECO:0000269" key="5">
    <source>
    </source>
</evidence>
<evidence type="ECO:0000269" key="6">
    <source>
    </source>
</evidence>
<evidence type="ECO:0000269" key="7">
    <source>
    </source>
</evidence>
<evidence type="ECO:0000269" key="8">
    <source>
    </source>
</evidence>
<evidence type="ECO:0000269" key="9">
    <source>
    </source>
</evidence>
<evidence type="ECO:0000269" key="10">
    <source>
    </source>
</evidence>
<evidence type="ECO:0000303" key="11">
    <source>
    </source>
</evidence>
<evidence type="ECO:0000305" key="12"/>
<evidence type="ECO:0000305" key="13">
    <source>
    </source>
</evidence>
<evidence type="ECO:0000305" key="14">
    <source>
    </source>
</evidence>
<evidence type="ECO:0000312" key="15">
    <source>
        <dbReference type="PDB" id="1R9I"/>
    </source>
</evidence>
<evidence type="ECO:0007829" key="16">
    <source>
        <dbReference type="PDB" id="1R9I"/>
    </source>
</evidence>